<protein>
    <recommendedName>
        <fullName evidence="1">PqqA binding protein</fullName>
    </recommendedName>
    <alternativeName>
        <fullName evidence="1">Coenzyme PQQ synthesis protein D</fullName>
    </alternativeName>
    <alternativeName>
        <fullName evidence="1">Pyrroloquinoline quinone biosynthesis protein D</fullName>
    </alternativeName>
</protein>
<feature type="chain" id="PRO_0000219970" description="PqqA binding protein">
    <location>
        <begin position="1"/>
        <end position="98"/>
    </location>
</feature>
<accession>Q9EXU9</accession>
<sequence>MTADAPVISGSSVVKLARGVRLHEDPVRGQTVLLAPERAMAVDDIAVAIVQALDGERNLDRIAADFAEKFDAPVEEIAEDVRTFVQELSVRRMLEIVQ</sequence>
<dbReference type="EMBL" id="AL591985">
    <property type="protein sequence ID" value="CAC48600.1"/>
    <property type="molecule type" value="Genomic_DNA"/>
</dbReference>
<dbReference type="PIR" id="H95866">
    <property type="entry name" value="H95866"/>
</dbReference>
<dbReference type="RefSeq" id="NP_436740.1">
    <property type="nucleotide sequence ID" value="NC_003078.1"/>
</dbReference>
<dbReference type="RefSeq" id="WP_003528708.1">
    <property type="nucleotide sequence ID" value="NC_003078.1"/>
</dbReference>
<dbReference type="SMR" id="Q9EXU9"/>
<dbReference type="EnsemblBacteria" id="CAC48600">
    <property type="protein sequence ID" value="CAC48600"/>
    <property type="gene ID" value="SM_b20207"/>
</dbReference>
<dbReference type="GeneID" id="89578680"/>
<dbReference type="KEGG" id="sme:SM_b20207"/>
<dbReference type="PATRIC" id="fig|266834.11.peg.5116"/>
<dbReference type="eggNOG" id="COG0535">
    <property type="taxonomic scope" value="Bacteria"/>
</dbReference>
<dbReference type="HOGENOM" id="CLU_163864_0_0_5"/>
<dbReference type="OrthoDB" id="7995890at2"/>
<dbReference type="UniPathway" id="UPA00539"/>
<dbReference type="PRO" id="PR:Q9EXU9"/>
<dbReference type="Proteomes" id="UP000001976">
    <property type="component" value="Plasmid pSymB"/>
</dbReference>
<dbReference type="GO" id="GO:0048038">
    <property type="term" value="F:quinone binding"/>
    <property type="evidence" value="ECO:0007669"/>
    <property type="project" value="InterPro"/>
</dbReference>
<dbReference type="GO" id="GO:0018189">
    <property type="term" value="P:pyrroloquinoline quinone biosynthetic process"/>
    <property type="evidence" value="ECO:0007669"/>
    <property type="project" value="UniProtKB-UniRule"/>
</dbReference>
<dbReference type="Gene3D" id="1.10.10.1150">
    <property type="entry name" value="Coenzyme PQQ synthesis protein D (PqqD)"/>
    <property type="match status" value="1"/>
</dbReference>
<dbReference type="HAMAP" id="MF_00655">
    <property type="entry name" value="PQQ_syn_PqqD"/>
    <property type="match status" value="1"/>
</dbReference>
<dbReference type="InterPro" id="IPR008792">
    <property type="entry name" value="PQQD"/>
</dbReference>
<dbReference type="InterPro" id="IPR022479">
    <property type="entry name" value="PqqD_bac"/>
</dbReference>
<dbReference type="InterPro" id="IPR041881">
    <property type="entry name" value="PqqD_sf"/>
</dbReference>
<dbReference type="NCBIfam" id="TIGR03859">
    <property type="entry name" value="PQQ_PqqD"/>
    <property type="match status" value="1"/>
</dbReference>
<dbReference type="Pfam" id="PF05402">
    <property type="entry name" value="PqqD"/>
    <property type="match status" value="1"/>
</dbReference>
<organism>
    <name type="scientific">Rhizobium meliloti (strain 1021)</name>
    <name type="common">Ensifer meliloti</name>
    <name type="synonym">Sinorhizobium meliloti</name>
    <dbReference type="NCBI Taxonomy" id="266834"/>
    <lineage>
        <taxon>Bacteria</taxon>
        <taxon>Pseudomonadati</taxon>
        <taxon>Pseudomonadota</taxon>
        <taxon>Alphaproteobacteria</taxon>
        <taxon>Hyphomicrobiales</taxon>
        <taxon>Rhizobiaceae</taxon>
        <taxon>Sinorhizobium/Ensifer group</taxon>
        <taxon>Sinorhizobium</taxon>
    </lineage>
</organism>
<name>PQQD_RHIME</name>
<evidence type="ECO:0000255" key="1">
    <source>
        <dbReference type="HAMAP-Rule" id="MF_00655"/>
    </source>
</evidence>
<gene>
    <name evidence="1" type="primary">pqqD</name>
    <name type="ordered locus">RB0200</name>
    <name type="ORF">SMb20207</name>
</gene>
<geneLocation type="plasmid">
    <name>pSymB</name>
    <name>megaplasmid 2</name>
</geneLocation>
<reference key="1">
    <citation type="submission" date="2000-10" db="EMBL/GenBank/DDBJ databases">
        <title>Mineral phosphate solubilization in Sinorhizobium meliloti.</title>
        <authorList>
            <person name="Finan T.M."/>
            <person name="Aneja P."/>
            <person name="Chain P."/>
            <person name="Napper K."/>
            <person name="Golding B."/>
        </authorList>
    </citation>
    <scope>NUCLEOTIDE SEQUENCE [GENOMIC DNA]</scope>
    <source>
        <strain>1021</strain>
    </source>
</reference>
<reference key="2">
    <citation type="journal article" date="2001" name="Proc. Natl. Acad. Sci. U.S.A.">
        <title>The complete sequence of the 1,683-kb pSymB megaplasmid from the N2-fixing endosymbiont Sinorhizobium meliloti.</title>
        <authorList>
            <person name="Finan T.M."/>
            <person name="Weidner S."/>
            <person name="Wong K."/>
            <person name="Buhrmester J."/>
            <person name="Chain P."/>
            <person name="Vorhoelter F.J."/>
            <person name="Hernandez-Lucas I."/>
            <person name="Becker A."/>
            <person name="Cowie A."/>
            <person name="Gouzy J."/>
            <person name="Golding B."/>
            <person name="Puehler A."/>
        </authorList>
    </citation>
    <scope>NUCLEOTIDE SEQUENCE [LARGE SCALE GENOMIC DNA]</scope>
    <source>
        <strain>1021</strain>
    </source>
</reference>
<reference key="3">
    <citation type="journal article" date="2001" name="Science">
        <title>The composite genome of the legume symbiont Sinorhizobium meliloti.</title>
        <authorList>
            <person name="Galibert F."/>
            <person name="Finan T.M."/>
            <person name="Long S.R."/>
            <person name="Puehler A."/>
            <person name="Abola P."/>
            <person name="Ampe F."/>
            <person name="Barloy-Hubler F."/>
            <person name="Barnett M.J."/>
            <person name="Becker A."/>
            <person name="Boistard P."/>
            <person name="Bothe G."/>
            <person name="Boutry M."/>
            <person name="Bowser L."/>
            <person name="Buhrmester J."/>
            <person name="Cadieu E."/>
            <person name="Capela D."/>
            <person name="Chain P."/>
            <person name="Cowie A."/>
            <person name="Davis R.W."/>
            <person name="Dreano S."/>
            <person name="Federspiel N.A."/>
            <person name="Fisher R.F."/>
            <person name="Gloux S."/>
            <person name="Godrie T."/>
            <person name="Goffeau A."/>
            <person name="Golding B."/>
            <person name="Gouzy J."/>
            <person name="Gurjal M."/>
            <person name="Hernandez-Lucas I."/>
            <person name="Hong A."/>
            <person name="Huizar L."/>
            <person name="Hyman R.W."/>
            <person name="Jones T."/>
            <person name="Kahn D."/>
            <person name="Kahn M.L."/>
            <person name="Kalman S."/>
            <person name="Keating D.H."/>
            <person name="Kiss E."/>
            <person name="Komp C."/>
            <person name="Lelaure V."/>
            <person name="Masuy D."/>
            <person name="Palm C."/>
            <person name="Peck M.C."/>
            <person name="Pohl T.M."/>
            <person name="Portetelle D."/>
            <person name="Purnelle B."/>
            <person name="Ramsperger U."/>
            <person name="Surzycki R."/>
            <person name="Thebault P."/>
            <person name="Vandenbol M."/>
            <person name="Vorhoelter F.J."/>
            <person name="Weidner S."/>
            <person name="Wells D.H."/>
            <person name="Wong K."/>
            <person name="Yeh K.-C."/>
            <person name="Batut J."/>
        </authorList>
    </citation>
    <scope>NUCLEOTIDE SEQUENCE [LARGE SCALE GENOMIC DNA]</scope>
    <source>
        <strain>1021</strain>
    </source>
</reference>
<proteinExistence type="inferred from homology"/>
<keyword id="KW-0614">Plasmid</keyword>
<keyword id="KW-0884">PQQ biosynthesis</keyword>
<keyword id="KW-1185">Reference proteome</keyword>
<comment type="function">
    <text evidence="1">Functions as a PqqA binding protein and presents PqqA to PqqE, in the pyrroloquinoline quinone (PQQ) biosynthetic pathway.</text>
</comment>
<comment type="pathway">
    <text evidence="1">Cofactor biosynthesis; pyrroloquinoline quinone biosynthesis.</text>
</comment>
<comment type="subunit">
    <text evidence="1">Monomer. Interacts with PqqE.</text>
</comment>
<comment type="similarity">
    <text evidence="1">Belongs to the PqqD family.</text>
</comment>